<accession>Q08903</accession>
<proteinExistence type="uncertain"/>
<dbReference type="EMBL" id="Z75286">
    <property type="protein sequence ID" value="CAA99710.1"/>
    <property type="molecule type" value="Genomic_DNA"/>
</dbReference>
<dbReference type="PIR" id="S67291">
    <property type="entry name" value="S67291"/>
</dbReference>
<dbReference type="DIP" id="DIP-4594N"/>
<dbReference type="IntAct" id="Q08903">
    <property type="interactions" value="1"/>
</dbReference>
<dbReference type="STRING" id="4932.YOR379C"/>
<dbReference type="PaxDb" id="4932-YOR379C"/>
<dbReference type="EnsemblFungi" id="YOR379C_mRNA">
    <property type="protein sequence ID" value="YOR379C"/>
    <property type="gene ID" value="YOR379C"/>
</dbReference>
<dbReference type="AGR" id="SGD:S000005906"/>
<dbReference type="SGD" id="S000005906">
    <property type="gene designation" value="YOR379C"/>
</dbReference>
<dbReference type="HOGENOM" id="CLU_2147836_0_0_1"/>
<comment type="miscellaneous">
    <text evidence="1">Almost completely overlaps YOR378W.</text>
</comment>
<comment type="caution">
    <text evidence="2">Product of a dubious gene prediction unlikely to encode a functional protein. Because of that it is not part of the S.cerevisiae S288c complete/reference proteome set.</text>
</comment>
<sequence length="112" mass="13282">MNLFYKMLLFGDPFFRLHKSAPCIRCCDKNAKSAQPDAHVPRTTISFQRLGTSVIYSRFNCTCNTQTYRYRIVYHRINQRGCKTLMFVWHRVTKHYCSGRKGHVHSPRHNND</sequence>
<gene>
    <name type="ordered locus">YOR379C</name>
    <name type="ORF">O6747</name>
</gene>
<organism>
    <name type="scientific">Saccharomyces cerevisiae (strain ATCC 204508 / S288c)</name>
    <name type="common">Baker's yeast</name>
    <dbReference type="NCBI Taxonomy" id="559292"/>
    <lineage>
        <taxon>Eukaryota</taxon>
        <taxon>Fungi</taxon>
        <taxon>Dikarya</taxon>
        <taxon>Ascomycota</taxon>
        <taxon>Saccharomycotina</taxon>
        <taxon>Saccharomycetes</taxon>
        <taxon>Saccharomycetales</taxon>
        <taxon>Saccharomycetaceae</taxon>
        <taxon>Saccharomyces</taxon>
    </lineage>
</organism>
<protein>
    <recommendedName>
        <fullName>Putative uncharacterized protein YOR379C</fullName>
    </recommendedName>
</protein>
<name>YO379_YEAST</name>
<feature type="chain" id="PRO_0000299744" description="Putative uncharacterized protein YOR379C">
    <location>
        <begin position="1"/>
        <end position="112"/>
    </location>
</feature>
<evidence type="ECO:0000305" key="1"/>
<evidence type="ECO:0000305" key="2">
    <source>
    </source>
</evidence>
<reference key="1">
    <citation type="journal article" date="1997" name="Nature">
        <title>The nucleotide sequence of Saccharomyces cerevisiae chromosome XV.</title>
        <authorList>
            <person name="Dujon B."/>
            <person name="Albermann K."/>
            <person name="Aldea M."/>
            <person name="Alexandraki D."/>
            <person name="Ansorge W."/>
            <person name="Arino J."/>
            <person name="Benes V."/>
            <person name="Bohn C."/>
            <person name="Bolotin-Fukuhara M."/>
            <person name="Bordonne R."/>
            <person name="Boyer J."/>
            <person name="Camasses A."/>
            <person name="Casamayor A."/>
            <person name="Casas C."/>
            <person name="Cheret G."/>
            <person name="Cziepluch C."/>
            <person name="Daignan-Fornier B."/>
            <person name="Dang V.-D."/>
            <person name="de Haan M."/>
            <person name="Delius H."/>
            <person name="Durand P."/>
            <person name="Fairhead C."/>
            <person name="Feldmann H."/>
            <person name="Gaillon L."/>
            <person name="Galisson F."/>
            <person name="Gamo F.-J."/>
            <person name="Gancedo C."/>
            <person name="Goffeau A."/>
            <person name="Goulding S.E."/>
            <person name="Grivell L.A."/>
            <person name="Habbig B."/>
            <person name="Hand N.J."/>
            <person name="Hani J."/>
            <person name="Hattenhorst U."/>
            <person name="Hebling U."/>
            <person name="Hernando Y."/>
            <person name="Herrero E."/>
            <person name="Heumann K."/>
            <person name="Hiesel R."/>
            <person name="Hilger F."/>
            <person name="Hofmann B."/>
            <person name="Hollenberg C.P."/>
            <person name="Hughes B."/>
            <person name="Jauniaux J.-C."/>
            <person name="Kalogeropoulos A."/>
            <person name="Katsoulou C."/>
            <person name="Kordes E."/>
            <person name="Lafuente M.J."/>
            <person name="Landt O."/>
            <person name="Louis E.J."/>
            <person name="Maarse A.C."/>
            <person name="Madania A."/>
            <person name="Mannhaupt G."/>
            <person name="Marck C."/>
            <person name="Martin R.P."/>
            <person name="Mewes H.-W."/>
            <person name="Michaux G."/>
            <person name="Paces V."/>
            <person name="Parle-McDermott A.G."/>
            <person name="Pearson B.M."/>
            <person name="Perrin A."/>
            <person name="Pettersson B."/>
            <person name="Poch O."/>
            <person name="Pohl T.M."/>
            <person name="Poirey R."/>
            <person name="Portetelle D."/>
            <person name="Pujol A."/>
            <person name="Purnelle B."/>
            <person name="Ramezani Rad M."/>
            <person name="Rechmann S."/>
            <person name="Schwager C."/>
            <person name="Schweizer M."/>
            <person name="Sor F."/>
            <person name="Sterky F."/>
            <person name="Tarassov I.A."/>
            <person name="Teodoru C."/>
            <person name="Tettelin H."/>
            <person name="Thierry A."/>
            <person name="Tobiasch E."/>
            <person name="Tzermia M."/>
            <person name="Uhlen M."/>
            <person name="Unseld M."/>
            <person name="Valens M."/>
            <person name="Vandenbol M."/>
            <person name="Vetter I."/>
            <person name="Vlcek C."/>
            <person name="Voet M."/>
            <person name="Volckaert G."/>
            <person name="Voss H."/>
            <person name="Wambutt R."/>
            <person name="Wedler H."/>
            <person name="Wiemann S."/>
            <person name="Winsor B."/>
            <person name="Wolfe K.H."/>
            <person name="Zollner A."/>
            <person name="Zumstein E."/>
            <person name="Kleine K."/>
        </authorList>
    </citation>
    <scope>NUCLEOTIDE SEQUENCE [LARGE SCALE GENOMIC DNA]</scope>
    <source>
        <strain>ATCC 204508 / S288c</strain>
    </source>
</reference>
<reference key="2">
    <citation type="journal article" date="2014" name="G3 (Bethesda)">
        <title>The reference genome sequence of Saccharomyces cerevisiae: Then and now.</title>
        <authorList>
            <person name="Engel S.R."/>
            <person name="Dietrich F.S."/>
            <person name="Fisk D.G."/>
            <person name="Binkley G."/>
            <person name="Balakrishnan R."/>
            <person name="Costanzo M.C."/>
            <person name="Dwight S.S."/>
            <person name="Hitz B.C."/>
            <person name="Karra K."/>
            <person name="Nash R.S."/>
            <person name="Weng S."/>
            <person name="Wong E.D."/>
            <person name="Lloyd P."/>
            <person name="Skrzypek M.S."/>
            <person name="Miyasato S.R."/>
            <person name="Simison M."/>
            <person name="Cherry J.M."/>
        </authorList>
    </citation>
    <scope>GENOME REANNOTATION</scope>
    <source>
        <strain>ATCC 204508 / S288c</strain>
    </source>
</reference>